<accession>Q65VE3</accession>
<gene>
    <name evidence="1" type="primary">fabZ</name>
    <name type="ordered locus">MS0460</name>
</gene>
<dbReference type="EC" id="4.2.1.59" evidence="1"/>
<dbReference type="EMBL" id="AE016827">
    <property type="protein sequence ID" value="AAU37067.1"/>
    <property type="molecule type" value="Genomic_DNA"/>
</dbReference>
<dbReference type="RefSeq" id="WP_011199642.1">
    <property type="nucleotide sequence ID" value="NC_006300.1"/>
</dbReference>
<dbReference type="SMR" id="Q65VE3"/>
<dbReference type="STRING" id="221988.MS0460"/>
<dbReference type="KEGG" id="msu:MS0460"/>
<dbReference type="eggNOG" id="COG0764">
    <property type="taxonomic scope" value="Bacteria"/>
</dbReference>
<dbReference type="HOGENOM" id="CLU_078912_1_0_6"/>
<dbReference type="Proteomes" id="UP000000607">
    <property type="component" value="Chromosome"/>
</dbReference>
<dbReference type="GO" id="GO:0005737">
    <property type="term" value="C:cytoplasm"/>
    <property type="evidence" value="ECO:0007669"/>
    <property type="project" value="UniProtKB-SubCell"/>
</dbReference>
<dbReference type="GO" id="GO:0016020">
    <property type="term" value="C:membrane"/>
    <property type="evidence" value="ECO:0007669"/>
    <property type="project" value="GOC"/>
</dbReference>
<dbReference type="GO" id="GO:0019171">
    <property type="term" value="F:(3R)-hydroxyacyl-[acyl-carrier-protein] dehydratase activity"/>
    <property type="evidence" value="ECO:0007669"/>
    <property type="project" value="UniProtKB-EC"/>
</dbReference>
<dbReference type="GO" id="GO:0006633">
    <property type="term" value="P:fatty acid biosynthetic process"/>
    <property type="evidence" value="ECO:0007669"/>
    <property type="project" value="UniProtKB-UniRule"/>
</dbReference>
<dbReference type="GO" id="GO:0009245">
    <property type="term" value="P:lipid A biosynthetic process"/>
    <property type="evidence" value="ECO:0007669"/>
    <property type="project" value="UniProtKB-UniRule"/>
</dbReference>
<dbReference type="CDD" id="cd01288">
    <property type="entry name" value="FabZ"/>
    <property type="match status" value="1"/>
</dbReference>
<dbReference type="FunFam" id="3.10.129.10:FF:000001">
    <property type="entry name" value="3-hydroxyacyl-[acyl-carrier-protein] dehydratase FabZ"/>
    <property type="match status" value="1"/>
</dbReference>
<dbReference type="Gene3D" id="3.10.129.10">
    <property type="entry name" value="Hotdog Thioesterase"/>
    <property type="match status" value="1"/>
</dbReference>
<dbReference type="HAMAP" id="MF_00406">
    <property type="entry name" value="FabZ"/>
    <property type="match status" value="1"/>
</dbReference>
<dbReference type="InterPro" id="IPR013114">
    <property type="entry name" value="FabA_FabZ"/>
</dbReference>
<dbReference type="InterPro" id="IPR010084">
    <property type="entry name" value="FabZ"/>
</dbReference>
<dbReference type="InterPro" id="IPR029069">
    <property type="entry name" value="HotDog_dom_sf"/>
</dbReference>
<dbReference type="NCBIfam" id="TIGR01750">
    <property type="entry name" value="fabZ"/>
    <property type="match status" value="1"/>
</dbReference>
<dbReference type="NCBIfam" id="NF000582">
    <property type="entry name" value="PRK00006.1"/>
    <property type="match status" value="1"/>
</dbReference>
<dbReference type="PANTHER" id="PTHR30272">
    <property type="entry name" value="3-HYDROXYACYL-[ACYL-CARRIER-PROTEIN] DEHYDRATASE"/>
    <property type="match status" value="1"/>
</dbReference>
<dbReference type="PANTHER" id="PTHR30272:SF1">
    <property type="entry name" value="3-HYDROXYACYL-[ACYL-CARRIER-PROTEIN] DEHYDRATASE"/>
    <property type="match status" value="1"/>
</dbReference>
<dbReference type="Pfam" id="PF07977">
    <property type="entry name" value="FabA"/>
    <property type="match status" value="1"/>
</dbReference>
<dbReference type="SUPFAM" id="SSF54637">
    <property type="entry name" value="Thioesterase/thiol ester dehydrase-isomerase"/>
    <property type="match status" value="1"/>
</dbReference>
<comment type="function">
    <text evidence="1">Involved in unsaturated fatty acids biosynthesis. Catalyzes the dehydration of short chain beta-hydroxyacyl-ACPs and long chain saturated and unsaturated beta-hydroxyacyl-ACPs.</text>
</comment>
<comment type="catalytic activity">
    <reaction evidence="1">
        <text>a (3R)-hydroxyacyl-[ACP] = a (2E)-enoyl-[ACP] + H2O</text>
        <dbReference type="Rhea" id="RHEA:13097"/>
        <dbReference type="Rhea" id="RHEA-COMP:9925"/>
        <dbReference type="Rhea" id="RHEA-COMP:9945"/>
        <dbReference type="ChEBI" id="CHEBI:15377"/>
        <dbReference type="ChEBI" id="CHEBI:78784"/>
        <dbReference type="ChEBI" id="CHEBI:78827"/>
        <dbReference type="EC" id="4.2.1.59"/>
    </reaction>
</comment>
<comment type="subcellular location">
    <subcellularLocation>
        <location evidence="1">Cytoplasm</location>
    </subcellularLocation>
</comment>
<comment type="similarity">
    <text evidence="1">Belongs to the thioester dehydratase family. FabZ subfamily.</text>
</comment>
<feature type="chain" id="PRO_0000091700" description="3-hydroxyacyl-[acyl-carrier-protein] dehydratase FabZ">
    <location>
        <begin position="1"/>
        <end position="150"/>
    </location>
</feature>
<feature type="active site" evidence="1">
    <location>
        <position position="57"/>
    </location>
</feature>
<reference key="1">
    <citation type="journal article" date="2004" name="Nat. Biotechnol.">
        <title>The genome sequence of the capnophilic rumen bacterium Mannheimia succiniciproducens.</title>
        <authorList>
            <person name="Hong S.H."/>
            <person name="Kim J.S."/>
            <person name="Lee S.Y."/>
            <person name="In Y.H."/>
            <person name="Choi S.S."/>
            <person name="Rih J.-K."/>
            <person name="Kim C.H."/>
            <person name="Jeong H."/>
            <person name="Hur C.G."/>
            <person name="Kim J.J."/>
        </authorList>
    </citation>
    <scope>NUCLEOTIDE SEQUENCE [LARGE SCALE GENOMIC DNA]</scope>
    <source>
        <strain>KCTC 0769BP / MBEL55E</strain>
    </source>
</reference>
<sequence>MTTENRPAKIIEAHEIMTLLPHRYPFLLVDRVVDFEEGQWLKAYKNISVNEPCFTGHFPGQPILPGVLILEALAQSMGLLAFKTHEIKGGELFYFAGIDDARFKRPVLPGDRLELFVEVIKERRGITSFTGVASVDGEVACEAKLMCARR</sequence>
<name>FABZ_MANSM</name>
<proteinExistence type="inferred from homology"/>
<organism>
    <name type="scientific">Mannheimia succiniciproducens (strain KCTC 0769BP / MBEL55E)</name>
    <dbReference type="NCBI Taxonomy" id="221988"/>
    <lineage>
        <taxon>Bacteria</taxon>
        <taxon>Pseudomonadati</taxon>
        <taxon>Pseudomonadota</taxon>
        <taxon>Gammaproteobacteria</taxon>
        <taxon>Pasteurellales</taxon>
        <taxon>Pasteurellaceae</taxon>
        <taxon>Basfia</taxon>
    </lineage>
</organism>
<protein>
    <recommendedName>
        <fullName evidence="1">3-hydroxyacyl-[acyl-carrier-protein] dehydratase FabZ</fullName>
        <ecNumber evidence="1">4.2.1.59</ecNumber>
    </recommendedName>
    <alternativeName>
        <fullName evidence="1">(3R)-hydroxymyristoyl-[acyl-carrier-protein] dehydratase</fullName>
        <shortName evidence="1">(3R)-hydroxymyristoyl-ACP dehydrase</shortName>
    </alternativeName>
    <alternativeName>
        <fullName evidence="1">Beta-hydroxyacyl-ACP dehydratase</fullName>
    </alternativeName>
</protein>
<keyword id="KW-0963">Cytoplasm</keyword>
<keyword id="KW-0441">Lipid A biosynthesis</keyword>
<keyword id="KW-0444">Lipid biosynthesis</keyword>
<keyword id="KW-0443">Lipid metabolism</keyword>
<keyword id="KW-0456">Lyase</keyword>
<evidence type="ECO:0000255" key="1">
    <source>
        <dbReference type="HAMAP-Rule" id="MF_00406"/>
    </source>
</evidence>